<gene>
    <name evidence="1" type="primary">rihA</name>
    <name type="ordered locus">ECIAI1_0635</name>
</gene>
<reference key="1">
    <citation type="journal article" date="2009" name="PLoS Genet.">
        <title>Organised genome dynamics in the Escherichia coli species results in highly diverse adaptive paths.</title>
        <authorList>
            <person name="Touchon M."/>
            <person name="Hoede C."/>
            <person name="Tenaillon O."/>
            <person name="Barbe V."/>
            <person name="Baeriswyl S."/>
            <person name="Bidet P."/>
            <person name="Bingen E."/>
            <person name="Bonacorsi S."/>
            <person name="Bouchier C."/>
            <person name="Bouvet O."/>
            <person name="Calteau A."/>
            <person name="Chiapello H."/>
            <person name="Clermont O."/>
            <person name="Cruveiller S."/>
            <person name="Danchin A."/>
            <person name="Diard M."/>
            <person name="Dossat C."/>
            <person name="Karoui M.E."/>
            <person name="Frapy E."/>
            <person name="Garry L."/>
            <person name="Ghigo J.M."/>
            <person name="Gilles A.M."/>
            <person name="Johnson J."/>
            <person name="Le Bouguenec C."/>
            <person name="Lescat M."/>
            <person name="Mangenot S."/>
            <person name="Martinez-Jehanne V."/>
            <person name="Matic I."/>
            <person name="Nassif X."/>
            <person name="Oztas S."/>
            <person name="Petit M.A."/>
            <person name="Pichon C."/>
            <person name="Rouy Z."/>
            <person name="Ruf C.S."/>
            <person name="Schneider D."/>
            <person name="Tourret J."/>
            <person name="Vacherie B."/>
            <person name="Vallenet D."/>
            <person name="Medigue C."/>
            <person name="Rocha E.P.C."/>
            <person name="Denamur E."/>
        </authorList>
    </citation>
    <scope>NUCLEOTIDE SEQUENCE [LARGE SCALE GENOMIC DNA]</scope>
    <source>
        <strain>IAI1</strain>
    </source>
</reference>
<proteinExistence type="inferred from homology"/>
<dbReference type="EC" id="3.2.-.-" evidence="1"/>
<dbReference type="EMBL" id="CU928160">
    <property type="protein sequence ID" value="CAQ97505.1"/>
    <property type="molecule type" value="Genomic_DNA"/>
</dbReference>
<dbReference type="RefSeq" id="WP_001207522.1">
    <property type="nucleotide sequence ID" value="NC_011741.1"/>
</dbReference>
<dbReference type="SMR" id="B7M5H8"/>
<dbReference type="GeneID" id="93776831"/>
<dbReference type="KEGG" id="ecr:ECIAI1_0635"/>
<dbReference type="HOGENOM" id="CLU_036838_2_0_6"/>
<dbReference type="GO" id="GO:0005829">
    <property type="term" value="C:cytosol"/>
    <property type="evidence" value="ECO:0007669"/>
    <property type="project" value="TreeGrafter"/>
</dbReference>
<dbReference type="GO" id="GO:0008477">
    <property type="term" value="F:purine nucleosidase activity"/>
    <property type="evidence" value="ECO:0007669"/>
    <property type="project" value="TreeGrafter"/>
</dbReference>
<dbReference type="GO" id="GO:0045437">
    <property type="term" value="F:uridine nucleosidase activity"/>
    <property type="evidence" value="ECO:0007669"/>
    <property type="project" value="InterPro"/>
</dbReference>
<dbReference type="GO" id="GO:0015949">
    <property type="term" value="P:nucleobase-containing small molecule interconversion"/>
    <property type="evidence" value="ECO:0007669"/>
    <property type="project" value="InterPro"/>
</dbReference>
<dbReference type="GO" id="GO:0006152">
    <property type="term" value="P:purine nucleoside catabolic process"/>
    <property type="evidence" value="ECO:0007669"/>
    <property type="project" value="TreeGrafter"/>
</dbReference>
<dbReference type="GO" id="GO:0006206">
    <property type="term" value="P:pyrimidine nucleobase metabolic process"/>
    <property type="evidence" value="ECO:0007669"/>
    <property type="project" value="UniProtKB-UniRule"/>
</dbReference>
<dbReference type="CDD" id="cd02651">
    <property type="entry name" value="nuc_hydro_IU_UC_XIUA"/>
    <property type="match status" value="1"/>
</dbReference>
<dbReference type="FunFam" id="3.90.245.10:FF:000001">
    <property type="entry name" value="Pyrimidine-specific ribonucleoside hydrolase RihA"/>
    <property type="match status" value="1"/>
</dbReference>
<dbReference type="Gene3D" id="3.90.245.10">
    <property type="entry name" value="Ribonucleoside hydrolase-like"/>
    <property type="match status" value="1"/>
</dbReference>
<dbReference type="HAMAP" id="MF_01431">
    <property type="entry name" value="Pyrim_hydro_RihA"/>
    <property type="match status" value="1"/>
</dbReference>
<dbReference type="InterPro" id="IPR015910">
    <property type="entry name" value="I/U_nuclsd_hydro_CS"/>
</dbReference>
<dbReference type="InterPro" id="IPR001910">
    <property type="entry name" value="Inosine/uridine_hydrolase_dom"/>
</dbReference>
<dbReference type="InterPro" id="IPR023186">
    <property type="entry name" value="IUNH"/>
</dbReference>
<dbReference type="InterPro" id="IPR022975">
    <property type="entry name" value="Pyrim_hydro_RihA"/>
</dbReference>
<dbReference type="InterPro" id="IPR036452">
    <property type="entry name" value="Ribo_hydro-like"/>
</dbReference>
<dbReference type="NCBIfam" id="NF007761">
    <property type="entry name" value="PRK10443.1"/>
    <property type="match status" value="1"/>
</dbReference>
<dbReference type="PANTHER" id="PTHR12304">
    <property type="entry name" value="INOSINE-URIDINE PREFERRING NUCLEOSIDE HYDROLASE"/>
    <property type="match status" value="1"/>
</dbReference>
<dbReference type="PANTHER" id="PTHR12304:SF4">
    <property type="entry name" value="URIDINE NUCLEOSIDASE"/>
    <property type="match status" value="1"/>
</dbReference>
<dbReference type="Pfam" id="PF01156">
    <property type="entry name" value="IU_nuc_hydro"/>
    <property type="match status" value="1"/>
</dbReference>
<dbReference type="SUPFAM" id="SSF53590">
    <property type="entry name" value="Nucleoside hydrolase"/>
    <property type="match status" value="1"/>
</dbReference>
<dbReference type="PROSITE" id="PS01247">
    <property type="entry name" value="IUNH"/>
    <property type="match status" value="1"/>
</dbReference>
<accession>B7M5H8</accession>
<feature type="chain" id="PRO_1000145792" description="Pyrimidine-specific ribonucleoside hydrolase RihA">
    <location>
        <begin position="1"/>
        <end position="311"/>
    </location>
</feature>
<feature type="active site" evidence="1">
    <location>
        <position position="240"/>
    </location>
</feature>
<comment type="function">
    <text evidence="1">Hydrolyzes with equal efficiency cytidine or uridine to ribose and cytosine or uracil, respectively.</text>
</comment>
<comment type="similarity">
    <text evidence="1">Belongs to the IUNH family. RihA subfamily.</text>
</comment>
<keyword id="KW-0326">Glycosidase</keyword>
<keyword id="KW-0378">Hydrolase</keyword>
<name>RIHA_ECO8A</name>
<evidence type="ECO:0000255" key="1">
    <source>
        <dbReference type="HAMAP-Rule" id="MF_01431"/>
    </source>
</evidence>
<sequence>MALPILLDCDPGHDDAIAIVLALASPELDVKAITSSAGNQTPEKTLRNVLRMLTLLNRTDIPVAGGAVKPLMRELIIADNVHGESGLDGPALPEPTFAPQNCTAVELMAKTLRESAEPVTIVSTGPQTNVALLLNSHPELHSKIARIVIMGGAMGLGNWTPAAEFNIYVDPEAAEIVFQSGIPVVMAGLDVTHKAQIHVEDTERFRAIGNPVSTIVAELLDFFLEYHKDEKWGFVGAPLHDPCTIAWLLKPELFTTVERWVGVETQGKYSQGMTVVDYYYLTGNKPNATVMVDVDRQGFVDLLADRLKFYA</sequence>
<organism>
    <name type="scientific">Escherichia coli O8 (strain IAI1)</name>
    <dbReference type="NCBI Taxonomy" id="585034"/>
    <lineage>
        <taxon>Bacteria</taxon>
        <taxon>Pseudomonadati</taxon>
        <taxon>Pseudomonadota</taxon>
        <taxon>Gammaproteobacteria</taxon>
        <taxon>Enterobacterales</taxon>
        <taxon>Enterobacteriaceae</taxon>
        <taxon>Escherichia</taxon>
    </lineage>
</organism>
<protein>
    <recommendedName>
        <fullName evidence="1">Pyrimidine-specific ribonucleoside hydrolase RihA</fullName>
        <ecNumber evidence="1">3.2.-.-</ecNumber>
    </recommendedName>
    <alternativeName>
        <fullName evidence="1">Cytidine/uridine-specific hydrolase</fullName>
    </alternativeName>
</protein>